<protein>
    <recommendedName>
        <fullName evidence="1">L-ribulose-5-phosphate 3-epimerase UlaE</fullName>
        <ecNumber evidence="1">5.1.3.22</ecNumber>
    </recommendedName>
    <alternativeName>
        <fullName evidence="1">L-ascorbate utilization protein E</fullName>
    </alternativeName>
    <alternativeName>
        <fullName evidence="1">L-xylulose-5-phosphate 3-epimerase</fullName>
    </alternativeName>
</protein>
<gene>
    <name evidence="1" type="primary">ulaE</name>
    <name type="ordered locus">ECIAI39_4662</name>
</gene>
<organism>
    <name type="scientific">Escherichia coli O7:K1 (strain IAI39 / ExPEC)</name>
    <dbReference type="NCBI Taxonomy" id="585057"/>
    <lineage>
        <taxon>Bacteria</taxon>
        <taxon>Pseudomonadati</taxon>
        <taxon>Pseudomonadota</taxon>
        <taxon>Gammaproteobacteria</taxon>
        <taxon>Enterobacterales</taxon>
        <taxon>Enterobacteriaceae</taxon>
        <taxon>Escherichia</taxon>
    </lineage>
</organism>
<evidence type="ECO:0000255" key="1">
    <source>
        <dbReference type="HAMAP-Rule" id="MF_01951"/>
    </source>
</evidence>
<proteinExistence type="inferred from homology"/>
<reference key="1">
    <citation type="journal article" date="2009" name="PLoS Genet.">
        <title>Organised genome dynamics in the Escherichia coli species results in highly diverse adaptive paths.</title>
        <authorList>
            <person name="Touchon M."/>
            <person name="Hoede C."/>
            <person name="Tenaillon O."/>
            <person name="Barbe V."/>
            <person name="Baeriswyl S."/>
            <person name="Bidet P."/>
            <person name="Bingen E."/>
            <person name="Bonacorsi S."/>
            <person name="Bouchier C."/>
            <person name="Bouvet O."/>
            <person name="Calteau A."/>
            <person name="Chiapello H."/>
            <person name="Clermont O."/>
            <person name="Cruveiller S."/>
            <person name="Danchin A."/>
            <person name="Diard M."/>
            <person name="Dossat C."/>
            <person name="Karoui M.E."/>
            <person name="Frapy E."/>
            <person name="Garry L."/>
            <person name="Ghigo J.M."/>
            <person name="Gilles A.M."/>
            <person name="Johnson J."/>
            <person name="Le Bouguenec C."/>
            <person name="Lescat M."/>
            <person name="Mangenot S."/>
            <person name="Martinez-Jehanne V."/>
            <person name="Matic I."/>
            <person name="Nassif X."/>
            <person name="Oztas S."/>
            <person name="Petit M.A."/>
            <person name="Pichon C."/>
            <person name="Rouy Z."/>
            <person name="Ruf C.S."/>
            <person name="Schneider D."/>
            <person name="Tourret J."/>
            <person name="Vacherie B."/>
            <person name="Vallenet D."/>
            <person name="Medigue C."/>
            <person name="Rocha E.P.C."/>
            <person name="Denamur E."/>
        </authorList>
    </citation>
    <scope>NUCLEOTIDE SEQUENCE [LARGE SCALE GENOMIC DNA]</scope>
    <source>
        <strain>IAI39 / ExPEC</strain>
    </source>
</reference>
<accession>B7NTQ3</accession>
<dbReference type="EC" id="5.1.3.22" evidence="1"/>
<dbReference type="EMBL" id="CU928164">
    <property type="protein sequence ID" value="CAR20760.1"/>
    <property type="molecule type" value="Genomic_DNA"/>
</dbReference>
<dbReference type="RefSeq" id="WP_000949498.1">
    <property type="nucleotide sequence ID" value="NC_011750.1"/>
</dbReference>
<dbReference type="RefSeq" id="YP_002410523.1">
    <property type="nucleotide sequence ID" value="NC_011750.1"/>
</dbReference>
<dbReference type="SMR" id="B7NTQ3"/>
<dbReference type="STRING" id="585057.ECIAI39_4662"/>
<dbReference type="GeneID" id="86861409"/>
<dbReference type="KEGG" id="ect:ECIAI39_4662"/>
<dbReference type="PATRIC" id="fig|585057.6.peg.4809"/>
<dbReference type="HOGENOM" id="CLU_082738_0_0_6"/>
<dbReference type="UniPathway" id="UPA00263">
    <property type="reaction ID" value="UER00379"/>
</dbReference>
<dbReference type="Proteomes" id="UP000000749">
    <property type="component" value="Chromosome"/>
</dbReference>
<dbReference type="GO" id="GO:0016861">
    <property type="term" value="F:intramolecular oxidoreductase activity, interconverting aldoses and ketoses"/>
    <property type="evidence" value="ECO:0007669"/>
    <property type="project" value="InterPro"/>
</dbReference>
<dbReference type="GO" id="GO:0034015">
    <property type="term" value="F:L-ribulose-5-phosphate 3-epimerase activity"/>
    <property type="evidence" value="ECO:0007669"/>
    <property type="project" value="UniProtKB-UniRule"/>
</dbReference>
<dbReference type="GO" id="GO:0019854">
    <property type="term" value="P:L-ascorbic acid catabolic process"/>
    <property type="evidence" value="ECO:0007669"/>
    <property type="project" value="UniProtKB-UniRule"/>
</dbReference>
<dbReference type="FunFam" id="3.20.20.150:FF:000003">
    <property type="entry name" value="L-ribulose-5-phosphate 3-epimerase UlaE"/>
    <property type="match status" value="1"/>
</dbReference>
<dbReference type="Gene3D" id="3.20.20.150">
    <property type="entry name" value="Divalent-metal-dependent TIM barrel enzymes"/>
    <property type="match status" value="1"/>
</dbReference>
<dbReference type="HAMAP" id="MF_01951">
    <property type="entry name" value="UlaE"/>
    <property type="match status" value="1"/>
</dbReference>
<dbReference type="InterPro" id="IPR004560">
    <property type="entry name" value="L-Ru-5P_3-Epase"/>
</dbReference>
<dbReference type="InterPro" id="IPR023492">
    <property type="entry name" value="L-Ru-5P_3-Epase_Enterobacteria"/>
</dbReference>
<dbReference type="InterPro" id="IPR050417">
    <property type="entry name" value="Sugar_Epim/Isomerase"/>
</dbReference>
<dbReference type="InterPro" id="IPR036237">
    <property type="entry name" value="Xyl_isomerase-like_sf"/>
</dbReference>
<dbReference type="InterPro" id="IPR013022">
    <property type="entry name" value="Xyl_isomerase-like_TIM-brl"/>
</dbReference>
<dbReference type="NCBIfam" id="TIGR00542">
    <property type="entry name" value="hxl6Piso_put"/>
    <property type="match status" value="1"/>
</dbReference>
<dbReference type="NCBIfam" id="NF009688">
    <property type="entry name" value="PRK13209.1"/>
    <property type="match status" value="1"/>
</dbReference>
<dbReference type="NCBIfam" id="NF009689">
    <property type="entry name" value="PRK13210.1"/>
    <property type="match status" value="1"/>
</dbReference>
<dbReference type="PANTHER" id="PTHR43489">
    <property type="entry name" value="ISOMERASE"/>
    <property type="match status" value="1"/>
</dbReference>
<dbReference type="PANTHER" id="PTHR43489:SF8">
    <property type="entry name" value="L-RIBULOSE-5-PHOSPHATE 3-EPIMERASE ULAE"/>
    <property type="match status" value="1"/>
</dbReference>
<dbReference type="Pfam" id="PF01261">
    <property type="entry name" value="AP_endonuc_2"/>
    <property type="match status" value="1"/>
</dbReference>
<dbReference type="SUPFAM" id="SSF51658">
    <property type="entry name" value="Xylose isomerase-like"/>
    <property type="match status" value="1"/>
</dbReference>
<sequence length="284" mass="32035">MLSKQIPLGIYEKALPAGECWLERLQLAKTLGFDFVEMSVDETDDRLSRLDWSREQRLALVNAIVETGVRVPSMCLSAHRRFPLGSEDDAVRAQGLEIMRKAIQFAQDVGIRVIQLAGYDVYYQEANNETRRRFRDGLKESVEMASRAQVTLAMEIMDYPLMNSISKALGYAHYLNNPWFQLYPDIGNLSAWDNDVQMELQAGIGHIVAVHVKDTKPGVFKNVPFGEGVVDFERCFETLKQSGYCGPYLIEMWSETAEDPAAEVAKARDWVKARMAKAGMVEAA</sequence>
<name>ULAE_ECO7I</name>
<comment type="function">
    <text evidence="1">Catalyzes the isomerization of L-xylulose-5-phosphate to L-ribulose-5-phosphate. Is involved in the anaerobic L-ascorbate utilization.</text>
</comment>
<comment type="catalytic activity">
    <reaction evidence="1">
        <text>L-ribulose 5-phosphate = L-xylulose 5-phosphate</text>
        <dbReference type="Rhea" id="RHEA:18497"/>
        <dbReference type="ChEBI" id="CHEBI:57829"/>
        <dbReference type="ChEBI" id="CHEBI:58226"/>
        <dbReference type="EC" id="5.1.3.22"/>
    </reaction>
</comment>
<comment type="pathway">
    <text evidence="1">Cofactor degradation; L-ascorbate degradation; D-xylulose 5-phosphate from L-ascorbate: step 3/4.</text>
</comment>
<comment type="induction">
    <text evidence="1">Induced by L-ascorbate. Repressed by UlaR.</text>
</comment>
<comment type="similarity">
    <text evidence="1">Belongs to the L-ribulose-5-phosphate 3-epimerase family.</text>
</comment>
<keyword id="KW-0413">Isomerase</keyword>
<feature type="chain" id="PRO_1000188824" description="L-ribulose-5-phosphate 3-epimerase UlaE">
    <location>
        <begin position="1"/>
        <end position="284"/>
    </location>
</feature>